<proteinExistence type="evidence at protein level"/>
<comment type="catalytic activity">
    <reaction>
        <text>nitric oxide + Fe(III)-[cytochrome c] + H2O = Fe(II)-[cytochrome c] + nitrite + 2 H(+)</text>
        <dbReference type="Rhea" id="RHEA:15233"/>
        <dbReference type="Rhea" id="RHEA-COMP:10350"/>
        <dbReference type="Rhea" id="RHEA-COMP:14399"/>
        <dbReference type="ChEBI" id="CHEBI:15377"/>
        <dbReference type="ChEBI" id="CHEBI:15378"/>
        <dbReference type="ChEBI" id="CHEBI:16301"/>
        <dbReference type="ChEBI" id="CHEBI:16480"/>
        <dbReference type="ChEBI" id="CHEBI:29033"/>
        <dbReference type="ChEBI" id="CHEBI:29034"/>
        <dbReference type="EC" id="1.7.2.1"/>
    </reaction>
</comment>
<comment type="catalytic activity">
    <reaction>
        <text>A + NH4(+) + H2O = hydroxylamine + AH2 + H(+)</text>
        <dbReference type="Rhea" id="RHEA:22052"/>
        <dbReference type="ChEBI" id="CHEBI:13193"/>
        <dbReference type="ChEBI" id="CHEBI:15377"/>
        <dbReference type="ChEBI" id="CHEBI:15378"/>
        <dbReference type="ChEBI" id="CHEBI:15429"/>
        <dbReference type="ChEBI" id="CHEBI:17499"/>
        <dbReference type="ChEBI" id="CHEBI:28938"/>
        <dbReference type="EC" id="1.7.99.1"/>
    </reaction>
</comment>
<comment type="cofactor">
    <cofactor evidence="2">
        <name>heme c</name>
        <dbReference type="ChEBI" id="CHEBI:61717"/>
    </cofactor>
    <text evidence="2">Binds 1 heme c group covalently per subunit.</text>
</comment>
<comment type="cofactor">
    <cofactor evidence="2">
        <name>heme</name>
        <dbReference type="ChEBI" id="CHEBI:30413"/>
    </cofactor>
    <text evidence="2">Binds 1 heme d1 group per subunit.</text>
</comment>
<comment type="subunit">
    <text>Homodimer.</text>
</comment>
<comment type="subcellular location">
    <subcellularLocation>
        <location>Periplasm</location>
    </subcellularLocation>
</comment>
<feature type="signal peptide">
    <location>
        <begin position="1"/>
        <end position="29"/>
    </location>
</feature>
<feature type="chain" id="PRO_0000006575" description="Nitrite reductase">
    <location>
        <begin position="30"/>
        <end position="596"/>
    </location>
</feature>
<feature type="domain" description="Cytochrome c" evidence="1">
    <location>
        <begin position="77"/>
        <end position="162"/>
    </location>
</feature>
<feature type="region of interest" description="N-terminal tail">
    <location>
        <begin position="30"/>
        <end position="76"/>
    </location>
</feature>
<feature type="region of interest" description="D1-heme domain">
    <location>
        <begin position="163"/>
        <end position="596"/>
    </location>
</feature>
<feature type="binding site" description="axial binding residue" evidence="2 4">
    <location>
        <position position="46"/>
    </location>
    <ligand>
        <name>heme c</name>
        <dbReference type="ChEBI" id="CHEBI:61717"/>
    </ligand>
    <ligandPart>
        <name>Fe</name>
        <dbReference type="ChEBI" id="CHEBI:18248"/>
    </ligandPart>
</feature>
<feature type="binding site" description="axial binding residue" evidence="2 4">
    <location>
        <position position="54"/>
    </location>
    <ligand>
        <name>heme d1</name>
        <dbReference type="ChEBI" id="CHEBI:60549"/>
    </ligand>
    <ligandPart>
        <name>Fe</name>
        <dbReference type="ChEBI" id="CHEBI:18248"/>
    </ligandPart>
</feature>
<feature type="binding site" evidence="2 4">
    <location>
        <position position="57"/>
    </location>
    <ligand>
        <name>heme d1</name>
        <dbReference type="ChEBI" id="CHEBI:60549"/>
    </ligand>
</feature>
<feature type="binding site" description="covalent" evidence="2 4">
    <location>
        <position position="94"/>
    </location>
    <ligand>
        <name>heme c</name>
        <dbReference type="ChEBI" id="CHEBI:61717"/>
    </ligand>
</feature>
<feature type="binding site" description="covalent" evidence="2 4">
    <location>
        <position position="97"/>
    </location>
    <ligand>
        <name>heme c</name>
        <dbReference type="ChEBI" id="CHEBI:61717"/>
    </ligand>
</feature>
<feature type="binding site" description="axial binding residue" evidence="2 4">
    <location>
        <position position="98"/>
    </location>
    <ligand>
        <name>heme c</name>
        <dbReference type="ChEBI" id="CHEBI:61717"/>
    </ligand>
    <ligandPart>
        <name>Fe</name>
        <dbReference type="ChEBI" id="CHEBI:18248"/>
    </ligandPart>
</feature>
<feature type="binding site" evidence="2 4">
    <location>
        <position position="108"/>
    </location>
    <ligand>
        <name>heme c</name>
        <dbReference type="ChEBI" id="CHEBI:61717"/>
    </ligand>
</feature>
<feature type="binding site" evidence="2 4">
    <location>
        <position position="122"/>
    </location>
    <ligand>
        <name>heme c</name>
        <dbReference type="ChEBI" id="CHEBI:61717"/>
    </ligand>
</feature>
<feature type="binding site" evidence="2 4">
    <location>
        <position position="138"/>
    </location>
    <ligand>
        <name>heme d1</name>
        <dbReference type="ChEBI" id="CHEBI:60549"/>
    </ligand>
</feature>
<feature type="binding site" evidence="2 4">
    <location>
        <position position="203"/>
    </location>
    <ligand>
        <name>heme d1</name>
        <dbReference type="ChEBI" id="CHEBI:60549"/>
    </ligand>
</feature>
<feature type="binding site" description="axial binding residue" evidence="2 4">
    <location>
        <position position="229"/>
    </location>
    <ligand>
        <name>heme d1</name>
        <dbReference type="ChEBI" id="CHEBI:60549"/>
    </ligand>
    <ligandPart>
        <name>Fe</name>
        <dbReference type="ChEBI" id="CHEBI:18248"/>
    </ligandPart>
</feature>
<feature type="binding site" evidence="2 4">
    <location>
        <position position="232"/>
    </location>
    <ligand>
        <name>heme d1</name>
        <dbReference type="ChEBI" id="CHEBI:60549"/>
    </ligand>
</feature>
<feature type="binding site" evidence="2 4">
    <location>
        <position position="245"/>
    </location>
    <ligand>
        <name>heme d1</name>
        <dbReference type="ChEBI" id="CHEBI:60549"/>
    </ligand>
</feature>
<feature type="binding site" evidence="2 4">
    <location>
        <position position="272"/>
    </location>
    <ligand>
        <name>heme d1</name>
        <dbReference type="ChEBI" id="CHEBI:60549"/>
    </ligand>
</feature>
<feature type="binding site" evidence="2 4">
    <location>
        <position position="292"/>
    </location>
    <ligand>
        <name>heme d1</name>
        <dbReference type="ChEBI" id="CHEBI:60549"/>
    </ligand>
</feature>
<feature type="binding site" evidence="2 4">
    <location>
        <position position="420"/>
    </location>
    <ligand>
        <name>heme d1</name>
        <dbReference type="ChEBI" id="CHEBI:60549"/>
    </ligand>
</feature>
<feature type="binding site" evidence="2 4">
    <location>
        <position position="536"/>
    </location>
    <ligand>
        <name>heme d1</name>
        <dbReference type="ChEBI" id="CHEBI:60549"/>
    </ligand>
</feature>
<feature type="binding site" evidence="2 4">
    <location>
        <position position="583"/>
    </location>
    <ligand>
        <name>heme d1</name>
        <dbReference type="ChEBI" id="CHEBI:60549"/>
    </ligand>
</feature>
<feature type="sequence conflict" description="In Ref. 1; AAB17878." evidence="3" ref="1">
    <original>S</original>
    <variation>A</variation>
    <location>
        <position position="28"/>
    </location>
</feature>
<feature type="sequence conflict" description="In Ref. 1; AAB17878." evidence="3" ref="1">
    <original>S</original>
    <variation>T</variation>
    <location>
        <position position="76"/>
    </location>
</feature>
<feature type="sequence conflict" description="In Ref. 1; AAB17878." evidence="3" ref="1">
    <original>G</original>
    <variation>A</variation>
    <location>
        <position position="130"/>
    </location>
</feature>
<feature type="sequence conflict" description="In Ref. 1; AAB17878." evidence="3" ref="1">
    <original>A</original>
    <variation>T</variation>
    <location>
        <position position="214"/>
    </location>
</feature>
<feature type="helix" evidence="8">
    <location>
        <begin position="39"/>
        <end position="41"/>
    </location>
</feature>
<feature type="helix" evidence="8">
    <location>
        <begin position="42"/>
        <end position="45"/>
    </location>
</feature>
<feature type="strand" evidence="7">
    <location>
        <begin position="50"/>
        <end position="55"/>
    </location>
</feature>
<feature type="helix" evidence="8">
    <location>
        <begin position="61"/>
        <end position="63"/>
    </location>
</feature>
<feature type="helix" evidence="8">
    <location>
        <begin position="80"/>
        <end position="93"/>
    </location>
</feature>
<feature type="helix" evidence="8">
    <location>
        <begin position="95"/>
        <end position="98"/>
    </location>
</feature>
<feature type="strand" evidence="8">
    <location>
        <begin position="105"/>
        <end position="107"/>
    </location>
</feature>
<feature type="helix" evidence="8">
    <location>
        <begin position="112"/>
        <end position="118"/>
    </location>
</feature>
<feature type="helix" evidence="8">
    <location>
        <begin position="120"/>
        <end position="127"/>
    </location>
</feature>
<feature type="turn" evidence="5">
    <location>
        <begin position="132"/>
        <end position="134"/>
    </location>
</feature>
<feature type="turn" evidence="8">
    <location>
        <begin position="136"/>
        <end position="138"/>
    </location>
</feature>
<feature type="strand" evidence="6">
    <location>
        <begin position="142"/>
        <end position="144"/>
    </location>
</feature>
<feature type="helix" evidence="8">
    <location>
        <begin position="146"/>
        <end position="157"/>
    </location>
</feature>
<feature type="helix" evidence="8">
    <location>
        <begin position="168"/>
        <end position="174"/>
    </location>
</feature>
<feature type="strand" evidence="8">
    <location>
        <begin position="176"/>
        <end position="179"/>
    </location>
</feature>
<feature type="helix" evidence="8">
    <location>
        <begin position="181"/>
        <end position="183"/>
    </location>
</feature>
<feature type="helix" evidence="8">
    <location>
        <begin position="194"/>
        <end position="196"/>
    </location>
</feature>
<feature type="strand" evidence="8">
    <location>
        <begin position="197"/>
        <end position="202"/>
    </location>
</feature>
<feature type="turn" evidence="8">
    <location>
        <begin position="203"/>
        <end position="206"/>
    </location>
</feature>
<feature type="strand" evidence="8">
    <location>
        <begin position="207"/>
        <end position="212"/>
    </location>
</feature>
<feature type="turn" evidence="8">
    <location>
        <begin position="213"/>
        <end position="215"/>
    </location>
</feature>
<feature type="strand" evidence="8">
    <location>
        <begin position="218"/>
        <end position="223"/>
    </location>
</feature>
<feature type="strand" evidence="8">
    <location>
        <begin position="228"/>
        <end position="233"/>
    </location>
</feature>
<feature type="strand" evidence="8">
    <location>
        <begin position="239"/>
        <end position="244"/>
    </location>
</feature>
<feature type="strand" evidence="8">
    <location>
        <begin position="247"/>
        <end position="253"/>
    </location>
</feature>
<feature type="strand" evidence="8">
    <location>
        <begin position="256"/>
        <end position="258"/>
    </location>
</feature>
<feature type="strand" evidence="8">
    <location>
        <begin position="261"/>
        <end position="266"/>
    </location>
</feature>
<feature type="strand" evidence="8">
    <location>
        <begin position="269"/>
        <end position="276"/>
    </location>
</feature>
<feature type="turn" evidence="8">
    <location>
        <begin position="283"/>
        <end position="285"/>
    </location>
</feature>
<feature type="strand" evidence="8">
    <location>
        <begin position="286"/>
        <end position="293"/>
    </location>
</feature>
<feature type="strand" evidence="8">
    <location>
        <begin position="296"/>
        <end position="301"/>
    </location>
</feature>
<feature type="turn" evidence="8">
    <location>
        <begin position="302"/>
        <end position="304"/>
    </location>
</feature>
<feature type="strand" evidence="8">
    <location>
        <begin position="307"/>
        <end position="312"/>
    </location>
</feature>
<feature type="turn" evidence="8">
    <location>
        <begin position="318"/>
        <end position="320"/>
    </location>
</feature>
<feature type="strand" evidence="8">
    <location>
        <begin position="323"/>
        <end position="325"/>
    </location>
</feature>
<feature type="strand" evidence="8">
    <location>
        <begin position="329"/>
        <end position="334"/>
    </location>
</feature>
<feature type="strand" evidence="8">
    <location>
        <begin position="336"/>
        <end position="345"/>
    </location>
</feature>
<feature type="turn" evidence="8">
    <location>
        <begin position="346"/>
        <end position="349"/>
    </location>
</feature>
<feature type="strand" evidence="8">
    <location>
        <begin position="350"/>
        <end position="355"/>
    </location>
</feature>
<feature type="strand" evidence="8">
    <location>
        <begin position="359"/>
        <end position="368"/>
    </location>
</feature>
<feature type="strand" evidence="8">
    <location>
        <begin position="371"/>
        <end position="378"/>
    </location>
</feature>
<feature type="strand" evidence="8">
    <location>
        <begin position="384"/>
        <end position="389"/>
    </location>
</feature>
<feature type="helix" evidence="8">
    <location>
        <begin position="390"/>
        <end position="392"/>
    </location>
</feature>
<feature type="strand" evidence="8">
    <location>
        <begin position="394"/>
        <end position="399"/>
    </location>
</feature>
<feature type="turn" evidence="8">
    <location>
        <begin position="400"/>
        <end position="403"/>
    </location>
</feature>
<feature type="strand" evidence="8">
    <location>
        <begin position="404"/>
        <end position="410"/>
    </location>
</feature>
<feature type="strand" evidence="8">
    <location>
        <begin position="412"/>
        <end position="416"/>
    </location>
</feature>
<feature type="strand" evidence="8">
    <location>
        <begin position="422"/>
        <end position="426"/>
    </location>
</feature>
<feature type="turn" evidence="8">
    <location>
        <begin position="427"/>
        <end position="429"/>
    </location>
</feature>
<feature type="strand" evidence="8">
    <location>
        <begin position="430"/>
        <end position="447"/>
    </location>
</feature>
<feature type="turn" evidence="8">
    <location>
        <begin position="450"/>
        <end position="452"/>
    </location>
</feature>
<feature type="turn" evidence="8">
    <location>
        <begin position="454"/>
        <end position="456"/>
    </location>
</feature>
<feature type="strand" evidence="8">
    <location>
        <begin position="459"/>
        <end position="465"/>
    </location>
</feature>
<feature type="strand" evidence="8">
    <location>
        <begin position="481"/>
        <end position="486"/>
    </location>
</feature>
<feature type="helix" evidence="8">
    <location>
        <begin position="493"/>
        <end position="496"/>
    </location>
</feature>
<feature type="strand" evidence="8">
    <location>
        <begin position="499"/>
        <end position="503"/>
    </location>
</feature>
<feature type="helix" evidence="8">
    <location>
        <begin position="504"/>
        <end position="506"/>
    </location>
</feature>
<feature type="strand" evidence="8">
    <location>
        <begin position="510"/>
        <end position="512"/>
    </location>
</feature>
<feature type="strand" evidence="8">
    <location>
        <begin position="516"/>
        <end position="519"/>
    </location>
</feature>
<feature type="helix" evidence="8">
    <location>
        <begin position="521"/>
        <end position="525"/>
    </location>
</feature>
<feature type="strand" evidence="8">
    <location>
        <begin position="533"/>
        <end position="539"/>
    </location>
</feature>
<feature type="strand" evidence="8">
    <location>
        <begin position="543"/>
        <end position="551"/>
    </location>
</feature>
<feature type="strand" evidence="8">
    <location>
        <begin position="559"/>
        <end position="564"/>
    </location>
</feature>
<feature type="turn" evidence="8">
    <location>
        <begin position="565"/>
        <end position="568"/>
    </location>
</feature>
<feature type="strand" evidence="8">
    <location>
        <begin position="569"/>
        <end position="574"/>
    </location>
</feature>
<feature type="strand" evidence="8">
    <location>
        <begin position="581"/>
        <end position="587"/>
    </location>
</feature>
<feature type="helix" evidence="8">
    <location>
        <begin position="588"/>
        <end position="592"/>
    </location>
</feature>
<accession>P72181</accession>
<accession>Q9FCQ0</accession>
<gene>
    <name type="primary">nirS</name>
</gene>
<sequence length="596" mass="65383">MRQRTPFARPGLLASAALALVLGPLAASAQEQVAPPKDPAAALEDHKTRTDNRYEPSLDNLAQQDVAAPGAPEGVSALSDAQYNEANKIYFERCAGCHGVLRKGATGKALTPDLTRDLGFDYLQSFITYGSPAGMPNWGTSGELSAEQVDLMANYLLLDPAAPPEFGMKEMRESWKVHVAPEDRPTQQENDWDLENLFSVTLRDAGQIALIDGATYEIKSVLDTGYAVHISRLSASGRYLFVIGRDGKVNMIDLWMKEPTTVAEIKIGSEARSIETSKMEGWEDKYAIAGAYWPPQYVIMDGETLEPKKIQSTRGMTYDEQEYHPEPRVAAILASHYRPEFIVNVKETGKILLVDYTDLDNLKTTEISAERFLHDGGLDGSHRYFITAANARNKLVVIDTKEGKLVAIEDTGGQTPHPGRGANFVHPTFGPVWATSHMGDDSVALIGTDPEGHPDNAWKILDSFPALGGGSLFIKTHPNSQYLYVDATLNPEAEISGSVAVFDIKAMTGDGSDPEFKTLPIAEWAGITEGQPRVVQGEFNKDGTEVWFSVWNGKDQESALVVVDDKTLELKHVIKDERLVTPTGKFNVYNTMTDTY</sequence>
<organism>
    <name type="scientific">Paracoccus pantotrophus</name>
    <name type="common">Thiosphaera pantotropha</name>
    <dbReference type="NCBI Taxonomy" id="82367"/>
    <lineage>
        <taxon>Bacteria</taxon>
        <taxon>Pseudomonadati</taxon>
        <taxon>Pseudomonadota</taxon>
        <taxon>Alphaproteobacteria</taxon>
        <taxon>Rhodobacterales</taxon>
        <taxon>Paracoccaceae</taxon>
        <taxon>Paracoccus</taxon>
    </lineage>
</organism>
<keyword id="KW-0002">3D-structure</keyword>
<keyword id="KW-0249">Electron transport</keyword>
<keyword id="KW-0349">Heme</keyword>
<keyword id="KW-0408">Iron</keyword>
<keyword id="KW-0479">Metal-binding</keyword>
<keyword id="KW-0560">Oxidoreductase</keyword>
<keyword id="KW-0574">Periplasm</keyword>
<keyword id="KW-0732">Signal</keyword>
<keyword id="KW-0813">Transport</keyword>
<reference key="1">
    <citation type="journal article" date="2000" name="Microbiology">
        <title>Transcriptional analysis of the nirS gene, encoding cytochrome cd1 nitrite reductase, of Paracoccus pantotrophus LMD 92.63.</title>
        <authorList>
            <person name="Saunders N.F.W."/>
            <person name="Ferguson S.J."/>
            <person name="Baker S.C."/>
        </authorList>
    </citation>
    <scope>NUCLEOTIDE SEQUENCE [GENOMIC DNA]</scope>
    <source>
        <strain>LMD 92.63</strain>
    </source>
</reference>
<reference key="2">
    <citation type="journal article" date="2001" name="Biochem. Biophys. Res. Commun.">
        <title>The cytochrome c domain of dimeric cytochrome cd(1) of Paracoccus pantotrophus can be produced at high levels as a monomeric holoprotein using an improved c-type cytochrome expression system in Escherichia coli.</title>
        <authorList>
            <person name="Gordon E.H.J."/>
            <person name="Steensma E."/>
            <person name="Ferguson S.J."/>
        </authorList>
    </citation>
    <scope>NUCLEOTIDE SEQUENCE [GENOMIC DNA]</scope>
</reference>
<reference evidence="4" key="3">
    <citation type="journal article" date="1995" name="Cell">
        <title>The anatomy of a bifunctional enzyme: structural basis for reduction of oxygen to water and synthesis of nitric oxide by cytochrome cd1.</title>
        <authorList>
            <person name="Fueloep V."/>
            <person name="Moir J.W.B."/>
            <person name="Ferguson S.J."/>
            <person name="Hajdu J."/>
        </authorList>
    </citation>
    <scope>X-RAY CRYSTALLOGRAPHY (1.5 ANGSTROMS) OF 30-596 IN COMPLEX WITH HEME C AND HEME D1</scope>
    <scope>COFACTOR</scope>
</reference>
<reference key="4">
    <citation type="journal article" date="1997" name="J. Mol. Biol.">
        <title>Cytochrome cd1 structure: unusual haem environments in a nitrite reductase and analysis of factors contributing to beta-propeller folds.</title>
        <authorList>
            <person name="Baker S.C."/>
            <person name="Saunders N.F.W."/>
            <person name="Willis A.C."/>
            <person name="Ferguson S.J."/>
            <person name="Fueloep V."/>
            <person name="Hajdu J."/>
        </authorList>
    </citation>
    <scope>X-RAY CRYSTALLOGRAPHY (1.2 ANGSTROMS)</scope>
</reference>
<reference key="5">
    <citation type="journal article" date="1997" name="Nature">
        <title>Haem-ligand switching during catalysis in crystals of a nitrogen-cycle enzyme.</title>
        <authorList>
            <person name="Williams P.A."/>
            <person name="Fueloep V."/>
            <person name="Garman E.F."/>
            <person name="Saunders N.F.W."/>
            <person name="Ferguson S.J."/>
            <person name="Hajdu J."/>
        </authorList>
    </citation>
    <scope>X-RAY CRYSTALLOGRAPHY (1.8 ANGSTROMS)</scope>
</reference>
<reference key="6">
    <citation type="journal article" date="2000" name="Biochemistry">
        <title>Proton-coupled structural changes upon binding of carbon monoxide to cytochrome cd1: a combined flash photolysis and X-ray crystallography study.</title>
        <authorList>
            <person name="Sjoegren T."/>
            <person name="Svensson-Ek M."/>
            <person name="Hajdu J."/>
            <person name="Brzezinski P."/>
        </authorList>
    </citation>
    <scope>X-RAY CRYSTALLOGRAPHY (1.6 ANGSTROMS)</scope>
</reference>
<reference key="7">
    <citation type="journal article" date="2000" name="J. Biol. Chem.">
        <title>X-ray crystallographic study of cyanide binding provides insights into the structure-function relationship for cytochrome cd1 nitrite reductase from Paracoccus pantotrophus.</title>
        <authorList>
            <person name="Jafferji A."/>
            <person name="Allen J.W.A."/>
            <person name="Ferguson S.J."/>
            <person name="Fueloep V."/>
        </authorList>
    </citation>
    <scope>X-RAY CRYSTALLOGRAPHY (1.59 ANGSTROMS)</scope>
</reference>
<reference key="8">
    <citation type="journal article" date="2001" name="J. Biol. Chem.">
        <title>Structure of the bound dioxygen species in the cytochrome oxidase reaction of cytochrome cd1 nitrite reductase.</title>
        <authorList>
            <person name="Sjoegren T."/>
            <person name="Hajdu J."/>
        </authorList>
    </citation>
    <scope>X-RAY CRYSTALLOGRAPHY (1.46 ANGSTROMS)</scope>
</reference>
<reference key="9">
    <citation type="journal article" date="2001" name="J. Biol. Chem.">
        <title>The structure of an alternative form of Paracoccus pantotrophus cytochrome cd1 nitrite reductase.</title>
        <authorList>
            <person name="Sjoegren T."/>
            <person name="Hajdu J."/>
        </authorList>
    </citation>
    <scope>X-RAY CRYSTALLOGRAPHY (2.1 ANGSTROMS)</scope>
</reference>
<dbReference type="EC" id="1.7.2.1"/>
<dbReference type="EC" id="1.7.99.1"/>
<dbReference type="EMBL" id="U75413">
    <property type="protein sequence ID" value="AAB17878.1"/>
    <property type="molecule type" value="Genomic_DNA"/>
</dbReference>
<dbReference type="EMBL" id="AJ401462">
    <property type="protein sequence ID" value="CAC03621.1"/>
    <property type="molecule type" value="Genomic_DNA"/>
</dbReference>
<dbReference type="RefSeq" id="WP_024843009.1">
    <property type="nucleotide sequence ID" value="NZ_CP038203.1"/>
</dbReference>
<dbReference type="PDB" id="1AOF">
    <property type="method" value="X-ray"/>
    <property type="resolution" value="2.00 A"/>
    <property type="chains" value="A/B=30-596"/>
</dbReference>
<dbReference type="PDB" id="1AOM">
    <property type="method" value="X-ray"/>
    <property type="resolution" value="1.80 A"/>
    <property type="chains" value="A/B=30-596"/>
</dbReference>
<dbReference type="PDB" id="1AOQ">
    <property type="method" value="X-ray"/>
    <property type="resolution" value="1.80 A"/>
    <property type="chains" value="A/B=30-596"/>
</dbReference>
<dbReference type="PDB" id="1DY7">
    <property type="method" value="X-ray"/>
    <property type="resolution" value="1.60 A"/>
    <property type="chains" value="A/B=30-596"/>
</dbReference>
<dbReference type="PDB" id="1E2R">
    <property type="method" value="X-ray"/>
    <property type="resolution" value="1.59 A"/>
    <property type="chains" value="A/B=30-596"/>
</dbReference>
<dbReference type="PDB" id="1GQ1">
    <property type="method" value="X-ray"/>
    <property type="resolution" value="1.40 A"/>
    <property type="chains" value="A/B=30-596"/>
</dbReference>
<dbReference type="PDB" id="1H9X">
    <property type="method" value="X-ray"/>
    <property type="resolution" value="2.10 A"/>
    <property type="chains" value="A/B=30-596"/>
</dbReference>
<dbReference type="PDB" id="1H9Y">
    <property type="method" value="X-ray"/>
    <property type="resolution" value="2.40 A"/>
    <property type="chains" value="A/B=30-596"/>
</dbReference>
<dbReference type="PDB" id="1HCM">
    <property type="method" value="X-ray"/>
    <property type="resolution" value="2.50 A"/>
    <property type="chains" value="A/B=30-596"/>
</dbReference>
<dbReference type="PDB" id="1HJ3">
    <property type="method" value="X-ray"/>
    <property type="resolution" value="1.60 A"/>
    <property type="chains" value="A/B=30-596"/>
</dbReference>
<dbReference type="PDB" id="1HJ4">
    <property type="method" value="X-ray"/>
    <property type="resolution" value="1.60 A"/>
    <property type="chains" value="A/B=30-596"/>
</dbReference>
<dbReference type="PDB" id="1HJ5">
    <property type="method" value="X-ray"/>
    <property type="resolution" value="1.46 A"/>
    <property type="chains" value="A/B=30-596"/>
</dbReference>
<dbReference type="PDB" id="1QKS">
    <property type="method" value="X-ray"/>
    <property type="resolution" value="1.28 A"/>
    <property type="chains" value="A/B=30-596"/>
</dbReference>
<dbReference type="PDBsum" id="1AOF"/>
<dbReference type="PDBsum" id="1AOM"/>
<dbReference type="PDBsum" id="1AOQ"/>
<dbReference type="PDBsum" id="1DY7"/>
<dbReference type="PDBsum" id="1E2R"/>
<dbReference type="PDBsum" id="1GQ1"/>
<dbReference type="PDBsum" id="1H9X"/>
<dbReference type="PDBsum" id="1H9Y"/>
<dbReference type="PDBsum" id="1HCM"/>
<dbReference type="PDBsum" id="1HJ3"/>
<dbReference type="PDBsum" id="1HJ4"/>
<dbReference type="PDBsum" id="1HJ5"/>
<dbReference type="PDBsum" id="1QKS"/>
<dbReference type="SMR" id="P72181"/>
<dbReference type="STRING" id="82367.SAMN04244567_00716"/>
<dbReference type="DrugBank" id="DB03317">
    <property type="generic name" value="Ferroheme C"/>
</dbReference>
<dbReference type="DrugBank" id="DB03469">
    <property type="generic name" value="Heme D"/>
</dbReference>
<dbReference type="DrugBank" id="DB03309">
    <property type="generic name" value="N-cyclohexyltaurine"/>
</dbReference>
<dbReference type="GeneID" id="51371260"/>
<dbReference type="eggNOG" id="COG2010">
    <property type="taxonomic scope" value="Bacteria"/>
</dbReference>
<dbReference type="OrthoDB" id="5290932at2"/>
<dbReference type="BRENDA" id="1.7.2.1">
    <property type="organism ID" value="4531"/>
</dbReference>
<dbReference type="EvolutionaryTrace" id="P72181"/>
<dbReference type="GO" id="GO:0042597">
    <property type="term" value="C:periplasmic space"/>
    <property type="evidence" value="ECO:0007669"/>
    <property type="project" value="UniProtKB-SubCell"/>
</dbReference>
<dbReference type="GO" id="GO:0009055">
    <property type="term" value="F:electron transfer activity"/>
    <property type="evidence" value="ECO:0007669"/>
    <property type="project" value="InterPro"/>
</dbReference>
<dbReference type="GO" id="GO:0020037">
    <property type="term" value="F:heme binding"/>
    <property type="evidence" value="ECO:0007669"/>
    <property type="project" value="InterPro"/>
</dbReference>
<dbReference type="GO" id="GO:0050418">
    <property type="term" value="F:hydroxylamine reductase activity"/>
    <property type="evidence" value="ECO:0007669"/>
    <property type="project" value="UniProtKB-EC"/>
</dbReference>
<dbReference type="GO" id="GO:0046872">
    <property type="term" value="F:metal ion binding"/>
    <property type="evidence" value="ECO:0007669"/>
    <property type="project" value="UniProtKB-KW"/>
</dbReference>
<dbReference type="GO" id="GO:0050421">
    <property type="term" value="F:nitrite reductase (NO-forming) activity"/>
    <property type="evidence" value="ECO:0007669"/>
    <property type="project" value="UniProtKB-EC"/>
</dbReference>
<dbReference type="CDD" id="cd20779">
    <property type="entry name" value="8prop_hemeD1_NirS"/>
    <property type="match status" value="1"/>
</dbReference>
<dbReference type="FunFam" id="1.10.760.10:FF:000027">
    <property type="entry name" value="Nitrite reductase"/>
    <property type="match status" value="1"/>
</dbReference>
<dbReference type="FunFam" id="2.140.10.20:FF:000001">
    <property type="entry name" value="Nitrite reductase NirS"/>
    <property type="match status" value="1"/>
</dbReference>
<dbReference type="Gene3D" id="2.140.10.20">
    <property type="entry name" value="C-terminal (heme d1) domain of cytochrome cd1-nitrite reductase"/>
    <property type="match status" value="1"/>
</dbReference>
<dbReference type="Gene3D" id="1.10.760.10">
    <property type="entry name" value="Cytochrome c-like domain"/>
    <property type="match status" value="1"/>
</dbReference>
<dbReference type="InterPro" id="IPR009056">
    <property type="entry name" value="Cyt_c-like_dom"/>
</dbReference>
<dbReference type="InterPro" id="IPR036909">
    <property type="entry name" value="Cyt_c-like_dom_sf"/>
</dbReference>
<dbReference type="InterPro" id="IPR003143">
    <property type="entry name" value="Cyt_cd1_C_sf"/>
</dbReference>
<dbReference type="InterPro" id="IPR011048">
    <property type="entry name" value="Haem_d1_sf"/>
</dbReference>
<dbReference type="Pfam" id="PF02239">
    <property type="entry name" value="Cytochrom_D1"/>
    <property type="match status" value="1"/>
</dbReference>
<dbReference type="Pfam" id="PF13442">
    <property type="entry name" value="Cytochrome_CBB3"/>
    <property type="match status" value="1"/>
</dbReference>
<dbReference type="SUPFAM" id="SSF51004">
    <property type="entry name" value="C-terminal (heme d1) domain of cytochrome cd1-nitrite reductase"/>
    <property type="match status" value="1"/>
</dbReference>
<dbReference type="SUPFAM" id="SSF46626">
    <property type="entry name" value="Cytochrome c"/>
    <property type="match status" value="1"/>
</dbReference>
<dbReference type="PROSITE" id="PS51007">
    <property type="entry name" value="CYTC"/>
    <property type="match status" value="1"/>
</dbReference>
<protein>
    <recommendedName>
        <fullName>Nitrite reductase</fullName>
        <ecNumber>1.7.2.1</ecNumber>
    </recommendedName>
    <alternativeName>
        <fullName>Cytochrome cd1</fullName>
    </alternativeName>
    <alternativeName>
        <fullName>Cytochrome oxidase</fullName>
    </alternativeName>
    <alternativeName>
        <fullName>Hydroxylamine reductase</fullName>
        <ecNumber>1.7.99.1</ecNumber>
    </alternativeName>
</protein>
<name>NIRS_PARPN</name>
<evidence type="ECO:0000255" key="1">
    <source>
        <dbReference type="PROSITE-ProRule" id="PRU00433"/>
    </source>
</evidence>
<evidence type="ECO:0000269" key="2">
    <source>
    </source>
</evidence>
<evidence type="ECO:0000305" key="3"/>
<evidence type="ECO:0007744" key="4">
    <source>
        <dbReference type="PDB" id="1QKS"/>
    </source>
</evidence>
<evidence type="ECO:0007829" key="5">
    <source>
        <dbReference type="PDB" id="1DY7"/>
    </source>
</evidence>
<evidence type="ECO:0007829" key="6">
    <source>
        <dbReference type="PDB" id="1E2R"/>
    </source>
</evidence>
<evidence type="ECO:0007829" key="7">
    <source>
        <dbReference type="PDB" id="1HJ3"/>
    </source>
</evidence>
<evidence type="ECO:0007829" key="8">
    <source>
        <dbReference type="PDB" id="1QKS"/>
    </source>
</evidence>